<protein>
    <recommendedName>
        <fullName evidence="2">Sulfate adenylyltransferase subunit 1</fullName>
        <ecNumber evidence="2">2.7.7.4</ecNumber>
    </recommendedName>
    <alternativeName>
        <fullName evidence="2">ATP-sulfurylase large subunit</fullName>
    </alternativeName>
    <alternativeName>
        <fullName evidence="2">Sulfate adenylate transferase</fullName>
        <shortName evidence="2">SAT</shortName>
    </alternativeName>
</protein>
<organism>
    <name type="scientific">Yersinia pseudotuberculosis serotype O:1b (strain IP 31758)</name>
    <dbReference type="NCBI Taxonomy" id="349747"/>
    <lineage>
        <taxon>Bacteria</taxon>
        <taxon>Pseudomonadati</taxon>
        <taxon>Pseudomonadota</taxon>
        <taxon>Gammaproteobacteria</taxon>
        <taxon>Enterobacterales</taxon>
        <taxon>Yersiniaceae</taxon>
        <taxon>Yersinia</taxon>
    </lineage>
</organism>
<reference key="1">
    <citation type="journal article" date="2007" name="PLoS Genet.">
        <title>The complete genome sequence of Yersinia pseudotuberculosis IP31758, the causative agent of Far East scarlet-like fever.</title>
        <authorList>
            <person name="Eppinger M."/>
            <person name="Rosovitz M.J."/>
            <person name="Fricke W.F."/>
            <person name="Rasko D.A."/>
            <person name="Kokorina G."/>
            <person name="Fayolle C."/>
            <person name="Lindler L.E."/>
            <person name="Carniel E."/>
            <person name="Ravel J."/>
        </authorList>
    </citation>
    <scope>NUCLEOTIDE SEQUENCE [LARGE SCALE GENOMIC DNA]</scope>
    <source>
        <strain>IP 31758</strain>
    </source>
</reference>
<proteinExistence type="inferred from homology"/>
<evidence type="ECO:0000250" key="1"/>
<evidence type="ECO:0000255" key="2">
    <source>
        <dbReference type="HAMAP-Rule" id="MF_00062"/>
    </source>
</evidence>
<keyword id="KW-0067">ATP-binding</keyword>
<keyword id="KW-0342">GTP-binding</keyword>
<keyword id="KW-0547">Nucleotide-binding</keyword>
<keyword id="KW-0548">Nucleotidyltransferase</keyword>
<keyword id="KW-0808">Transferase</keyword>
<accession>A7FLY2</accession>
<sequence length="478" mass="53070">MILQSNSIAQQIADEGGVEAYLHAQQHKTMLRFLTCGSVDDGKSTLIGRLLHDTRQIYEDQLSTLHTDSKRIGTQGEKLDLALLVDGLQAEREQGITIDVAYRYFSTEKRKFIIADTPGHEQYTRNMATGASTCDLAILLIDARKGVLDQTRRHSFIATLLGIRHLVVAVNKMDLVGFQESVFTQFKDDYLSFAEQLPTDLDIKFVPLSALDGDNVASPSEKMDWYSGPTLLEILESVDVVNARRQQPLRFPVQYVNRPNLDFRGYAGTLSAGVVWVGQKVKVLPSGVESTVARIVTFDGDLTEANPGEAITLVLADEVDISRGDLLVDASETLKAARNALVDVVWMAEQPLVVGQSYDIKVAGKKTRARVENIQYQVEINSLTQRVVENLPLNGIGLVELAFDEPLLLDNYQRNRDTGGMIFIDRLSNVTVGAGLVREALASVYQENHDFSTFELELNALVRRHFPHWGARDLLGGK</sequence>
<feature type="chain" id="PRO_1000092166" description="Sulfate adenylyltransferase subunit 1">
    <location>
        <begin position="1"/>
        <end position="478"/>
    </location>
</feature>
<feature type="domain" description="tr-type G">
    <location>
        <begin position="28"/>
        <end position="244"/>
    </location>
</feature>
<feature type="region of interest" description="G1" evidence="1">
    <location>
        <begin position="37"/>
        <end position="44"/>
    </location>
</feature>
<feature type="region of interest" description="G2" evidence="1">
    <location>
        <begin position="95"/>
        <end position="99"/>
    </location>
</feature>
<feature type="region of interest" description="G3" evidence="1">
    <location>
        <begin position="116"/>
        <end position="119"/>
    </location>
</feature>
<feature type="region of interest" description="G4" evidence="1">
    <location>
        <begin position="171"/>
        <end position="174"/>
    </location>
</feature>
<feature type="region of interest" description="G5" evidence="1">
    <location>
        <begin position="209"/>
        <end position="211"/>
    </location>
</feature>
<feature type="binding site" evidence="2">
    <location>
        <begin position="37"/>
        <end position="44"/>
    </location>
    <ligand>
        <name>GTP</name>
        <dbReference type="ChEBI" id="CHEBI:37565"/>
    </ligand>
</feature>
<feature type="binding site" evidence="2">
    <location>
        <begin position="116"/>
        <end position="120"/>
    </location>
    <ligand>
        <name>GTP</name>
        <dbReference type="ChEBI" id="CHEBI:37565"/>
    </ligand>
</feature>
<feature type="binding site" evidence="2">
    <location>
        <begin position="171"/>
        <end position="174"/>
    </location>
    <ligand>
        <name>GTP</name>
        <dbReference type="ChEBI" id="CHEBI:37565"/>
    </ligand>
</feature>
<dbReference type="EC" id="2.7.7.4" evidence="2"/>
<dbReference type="EMBL" id="CP000720">
    <property type="protein sequence ID" value="ABS48897.1"/>
    <property type="molecule type" value="Genomic_DNA"/>
</dbReference>
<dbReference type="RefSeq" id="WP_002228227.1">
    <property type="nucleotide sequence ID" value="NC_009708.1"/>
</dbReference>
<dbReference type="SMR" id="A7FLY2"/>
<dbReference type="GeneID" id="57975344"/>
<dbReference type="KEGG" id="ypi:YpsIP31758_3303"/>
<dbReference type="HOGENOM" id="CLU_007265_5_2_6"/>
<dbReference type="UniPathway" id="UPA00140">
    <property type="reaction ID" value="UER00204"/>
</dbReference>
<dbReference type="Proteomes" id="UP000002412">
    <property type="component" value="Chromosome"/>
</dbReference>
<dbReference type="GO" id="GO:0005524">
    <property type="term" value="F:ATP binding"/>
    <property type="evidence" value="ECO:0007669"/>
    <property type="project" value="UniProtKB-KW"/>
</dbReference>
<dbReference type="GO" id="GO:0005525">
    <property type="term" value="F:GTP binding"/>
    <property type="evidence" value="ECO:0007669"/>
    <property type="project" value="UniProtKB-UniRule"/>
</dbReference>
<dbReference type="GO" id="GO:0003924">
    <property type="term" value="F:GTPase activity"/>
    <property type="evidence" value="ECO:0007669"/>
    <property type="project" value="InterPro"/>
</dbReference>
<dbReference type="GO" id="GO:0004781">
    <property type="term" value="F:sulfate adenylyltransferase (ATP) activity"/>
    <property type="evidence" value="ECO:0007669"/>
    <property type="project" value="UniProtKB-UniRule"/>
</dbReference>
<dbReference type="GO" id="GO:0070814">
    <property type="term" value="P:hydrogen sulfide biosynthetic process"/>
    <property type="evidence" value="ECO:0007669"/>
    <property type="project" value="UniProtKB-UniRule"/>
</dbReference>
<dbReference type="GO" id="GO:0000103">
    <property type="term" value="P:sulfate assimilation"/>
    <property type="evidence" value="ECO:0007669"/>
    <property type="project" value="UniProtKB-UniRule"/>
</dbReference>
<dbReference type="CDD" id="cd04166">
    <property type="entry name" value="CysN_ATPS"/>
    <property type="match status" value="1"/>
</dbReference>
<dbReference type="CDD" id="cd03695">
    <property type="entry name" value="CysN_NodQ_II"/>
    <property type="match status" value="1"/>
</dbReference>
<dbReference type="CDD" id="cd04095">
    <property type="entry name" value="CysN_NoDQ_III"/>
    <property type="match status" value="1"/>
</dbReference>
<dbReference type="FunFam" id="2.40.30.10:FF:000027">
    <property type="entry name" value="Sulfate adenylyltransferase subunit 1"/>
    <property type="match status" value="1"/>
</dbReference>
<dbReference type="FunFam" id="2.40.30.10:FF:000031">
    <property type="entry name" value="Sulfate adenylyltransferase subunit 1"/>
    <property type="match status" value="1"/>
</dbReference>
<dbReference type="FunFam" id="3.40.50.300:FF:000119">
    <property type="entry name" value="Sulfate adenylyltransferase subunit 1"/>
    <property type="match status" value="1"/>
</dbReference>
<dbReference type="Gene3D" id="3.40.50.300">
    <property type="entry name" value="P-loop containing nucleotide triphosphate hydrolases"/>
    <property type="match status" value="1"/>
</dbReference>
<dbReference type="Gene3D" id="2.40.30.10">
    <property type="entry name" value="Translation factors"/>
    <property type="match status" value="2"/>
</dbReference>
<dbReference type="HAMAP" id="MF_00062">
    <property type="entry name" value="Sulf_adenylyltr_sub1"/>
    <property type="match status" value="1"/>
</dbReference>
<dbReference type="InterPro" id="IPR041757">
    <property type="entry name" value="CysN_GTP-bd"/>
</dbReference>
<dbReference type="InterPro" id="IPR044138">
    <property type="entry name" value="CysN_II"/>
</dbReference>
<dbReference type="InterPro" id="IPR044139">
    <property type="entry name" value="CysN_NoDQ_III"/>
</dbReference>
<dbReference type="InterPro" id="IPR031157">
    <property type="entry name" value="G_TR_CS"/>
</dbReference>
<dbReference type="InterPro" id="IPR054696">
    <property type="entry name" value="GTP-eEF1A_C"/>
</dbReference>
<dbReference type="InterPro" id="IPR027417">
    <property type="entry name" value="P-loop_NTPase"/>
</dbReference>
<dbReference type="InterPro" id="IPR005225">
    <property type="entry name" value="Small_GTP-bd"/>
</dbReference>
<dbReference type="InterPro" id="IPR011779">
    <property type="entry name" value="SO4_adenylTrfase_lsu"/>
</dbReference>
<dbReference type="InterPro" id="IPR000795">
    <property type="entry name" value="T_Tr_GTP-bd_dom"/>
</dbReference>
<dbReference type="InterPro" id="IPR050100">
    <property type="entry name" value="TRAFAC_GTPase_members"/>
</dbReference>
<dbReference type="InterPro" id="IPR009000">
    <property type="entry name" value="Transl_B-barrel_sf"/>
</dbReference>
<dbReference type="InterPro" id="IPR009001">
    <property type="entry name" value="Transl_elong_EF1A/Init_IF2_C"/>
</dbReference>
<dbReference type="NCBIfam" id="TIGR02034">
    <property type="entry name" value="CysN"/>
    <property type="match status" value="1"/>
</dbReference>
<dbReference type="NCBIfam" id="NF003478">
    <property type="entry name" value="PRK05124.1"/>
    <property type="match status" value="1"/>
</dbReference>
<dbReference type="NCBIfam" id="TIGR00231">
    <property type="entry name" value="small_GTP"/>
    <property type="match status" value="1"/>
</dbReference>
<dbReference type="PANTHER" id="PTHR23115">
    <property type="entry name" value="TRANSLATION FACTOR"/>
    <property type="match status" value="1"/>
</dbReference>
<dbReference type="Pfam" id="PF22594">
    <property type="entry name" value="GTP-eEF1A_C"/>
    <property type="match status" value="1"/>
</dbReference>
<dbReference type="Pfam" id="PF00009">
    <property type="entry name" value="GTP_EFTU"/>
    <property type="match status" value="1"/>
</dbReference>
<dbReference type="PRINTS" id="PR00315">
    <property type="entry name" value="ELONGATNFCT"/>
</dbReference>
<dbReference type="SUPFAM" id="SSF50465">
    <property type="entry name" value="EF-Tu/eEF-1alpha/eIF2-gamma C-terminal domain"/>
    <property type="match status" value="1"/>
</dbReference>
<dbReference type="SUPFAM" id="SSF52540">
    <property type="entry name" value="P-loop containing nucleoside triphosphate hydrolases"/>
    <property type="match status" value="1"/>
</dbReference>
<dbReference type="SUPFAM" id="SSF50447">
    <property type="entry name" value="Translation proteins"/>
    <property type="match status" value="1"/>
</dbReference>
<dbReference type="PROSITE" id="PS00301">
    <property type="entry name" value="G_TR_1"/>
    <property type="match status" value="1"/>
</dbReference>
<dbReference type="PROSITE" id="PS51722">
    <property type="entry name" value="G_TR_2"/>
    <property type="match status" value="1"/>
</dbReference>
<name>CYSN_YERP3</name>
<gene>
    <name evidence="2" type="primary">cysN</name>
    <name type="ordered locus">YpsIP31758_3303</name>
</gene>
<comment type="function">
    <text evidence="2">With CysD forms the ATP sulfurylase (ATPS) that catalyzes the adenylation of sulfate producing adenosine 5'-phosphosulfate (APS) and diphosphate, the first enzymatic step in sulfur assimilation pathway. APS synthesis involves the formation of a high-energy phosphoric-sulfuric acid anhydride bond driven by GTP hydrolysis by CysN coupled to ATP hydrolysis by CysD.</text>
</comment>
<comment type="catalytic activity">
    <reaction evidence="2">
        <text>sulfate + ATP + H(+) = adenosine 5'-phosphosulfate + diphosphate</text>
        <dbReference type="Rhea" id="RHEA:18133"/>
        <dbReference type="ChEBI" id="CHEBI:15378"/>
        <dbReference type="ChEBI" id="CHEBI:16189"/>
        <dbReference type="ChEBI" id="CHEBI:30616"/>
        <dbReference type="ChEBI" id="CHEBI:33019"/>
        <dbReference type="ChEBI" id="CHEBI:58243"/>
        <dbReference type="EC" id="2.7.7.4"/>
    </reaction>
</comment>
<comment type="pathway">
    <text evidence="2">Sulfur metabolism; hydrogen sulfide biosynthesis; sulfite from sulfate: step 1/3.</text>
</comment>
<comment type="subunit">
    <text evidence="2">Heterodimer composed of CysD, the smaller subunit, and CysN.</text>
</comment>
<comment type="similarity">
    <text evidence="2">Belongs to the TRAFAC class translation factor GTPase superfamily. Classic translation factor GTPase family. CysN/NodQ subfamily.</text>
</comment>